<protein>
    <recommendedName>
        <fullName>UPF0758 protein lmo1549</fullName>
    </recommendedName>
</protein>
<comment type="similarity">
    <text evidence="2">Belongs to the UPF0758 family.</text>
</comment>
<feature type="chain" id="PRO_0000190709" description="UPF0758 protein lmo1549">
    <location>
        <begin position="1"/>
        <end position="224"/>
    </location>
</feature>
<feature type="domain" description="MPN" evidence="1">
    <location>
        <begin position="102"/>
        <end position="224"/>
    </location>
</feature>
<feature type="short sequence motif" description="JAMM motif" evidence="1">
    <location>
        <begin position="173"/>
        <end position="186"/>
    </location>
</feature>
<feature type="binding site" evidence="1">
    <location>
        <position position="173"/>
    </location>
    <ligand>
        <name>Zn(2+)</name>
        <dbReference type="ChEBI" id="CHEBI:29105"/>
        <note>catalytic</note>
    </ligand>
</feature>
<feature type="binding site" evidence="1">
    <location>
        <position position="175"/>
    </location>
    <ligand>
        <name>Zn(2+)</name>
        <dbReference type="ChEBI" id="CHEBI:29105"/>
        <note>catalytic</note>
    </ligand>
</feature>
<feature type="binding site" evidence="1">
    <location>
        <position position="186"/>
    </location>
    <ligand>
        <name>Zn(2+)</name>
        <dbReference type="ChEBI" id="CHEBI:29105"/>
        <note>catalytic</note>
    </ligand>
</feature>
<dbReference type="EMBL" id="AL591979">
    <property type="protein sequence ID" value="CAC99627.1"/>
    <property type="molecule type" value="Genomic_DNA"/>
</dbReference>
<dbReference type="PIR" id="AE1268">
    <property type="entry name" value="AE1268"/>
</dbReference>
<dbReference type="SMR" id="Q8Y6Y2"/>
<dbReference type="STRING" id="169963.gene:17594206"/>
<dbReference type="PaxDb" id="169963-lmo1549"/>
<dbReference type="EnsemblBacteria" id="CAC99627">
    <property type="protein sequence ID" value="CAC99627"/>
    <property type="gene ID" value="CAC99627"/>
</dbReference>
<dbReference type="KEGG" id="lmo:lmo1549"/>
<dbReference type="PATRIC" id="fig|169963.11.peg.1590"/>
<dbReference type="eggNOG" id="COG2003">
    <property type="taxonomic scope" value="Bacteria"/>
</dbReference>
<dbReference type="HOGENOM" id="CLU_073529_0_2_9"/>
<dbReference type="OrthoDB" id="9804482at2"/>
<dbReference type="PhylomeDB" id="Q8Y6Y2"/>
<dbReference type="BioCyc" id="LMON169963:LMO1549-MONOMER"/>
<dbReference type="Proteomes" id="UP000000817">
    <property type="component" value="Chromosome"/>
</dbReference>
<dbReference type="GO" id="GO:0046872">
    <property type="term" value="F:metal ion binding"/>
    <property type="evidence" value="ECO:0007669"/>
    <property type="project" value="UniProtKB-KW"/>
</dbReference>
<dbReference type="GO" id="GO:0008237">
    <property type="term" value="F:metallopeptidase activity"/>
    <property type="evidence" value="ECO:0007669"/>
    <property type="project" value="UniProtKB-KW"/>
</dbReference>
<dbReference type="GO" id="GO:0006508">
    <property type="term" value="P:proteolysis"/>
    <property type="evidence" value="ECO:0007669"/>
    <property type="project" value="UniProtKB-KW"/>
</dbReference>
<dbReference type="CDD" id="cd08071">
    <property type="entry name" value="MPN_DUF2466"/>
    <property type="match status" value="1"/>
</dbReference>
<dbReference type="FunFam" id="3.40.140.10:FF:000063">
    <property type="entry name" value="DNA repair protein RadC"/>
    <property type="match status" value="1"/>
</dbReference>
<dbReference type="Gene3D" id="1.10.150.20">
    <property type="entry name" value="5' to 3' exonuclease, C-terminal subdomain"/>
    <property type="match status" value="1"/>
</dbReference>
<dbReference type="Gene3D" id="3.40.140.10">
    <property type="entry name" value="Cytidine Deaminase, domain 2"/>
    <property type="match status" value="1"/>
</dbReference>
<dbReference type="InterPro" id="IPR037518">
    <property type="entry name" value="MPN"/>
</dbReference>
<dbReference type="InterPro" id="IPR025657">
    <property type="entry name" value="RadC_JAB"/>
</dbReference>
<dbReference type="InterPro" id="IPR010994">
    <property type="entry name" value="RuvA_2-like"/>
</dbReference>
<dbReference type="InterPro" id="IPR001405">
    <property type="entry name" value="UPF0758"/>
</dbReference>
<dbReference type="InterPro" id="IPR020891">
    <property type="entry name" value="UPF0758_CS"/>
</dbReference>
<dbReference type="InterPro" id="IPR046778">
    <property type="entry name" value="UPF0758_N"/>
</dbReference>
<dbReference type="NCBIfam" id="NF000642">
    <property type="entry name" value="PRK00024.1"/>
    <property type="match status" value="1"/>
</dbReference>
<dbReference type="NCBIfam" id="TIGR00608">
    <property type="entry name" value="radc"/>
    <property type="match status" value="1"/>
</dbReference>
<dbReference type="PANTHER" id="PTHR30471">
    <property type="entry name" value="DNA REPAIR PROTEIN RADC"/>
    <property type="match status" value="1"/>
</dbReference>
<dbReference type="PANTHER" id="PTHR30471:SF3">
    <property type="entry name" value="UPF0758 PROTEIN YEES-RELATED"/>
    <property type="match status" value="1"/>
</dbReference>
<dbReference type="Pfam" id="PF04002">
    <property type="entry name" value="RadC"/>
    <property type="match status" value="1"/>
</dbReference>
<dbReference type="Pfam" id="PF20582">
    <property type="entry name" value="UPF0758_N"/>
    <property type="match status" value="1"/>
</dbReference>
<dbReference type="SUPFAM" id="SSF102712">
    <property type="entry name" value="JAB1/MPN domain"/>
    <property type="match status" value="1"/>
</dbReference>
<dbReference type="SUPFAM" id="SSF47781">
    <property type="entry name" value="RuvA domain 2-like"/>
    <property type="match status" value="1"/>
</dbReference>
<dbReference type="PROSITE" id="PS50249">
    <property type="entry name" value="MPN"/>
    <property type="match status" value="1"/>
</dbReference>
<dbReference type="PROSITE" id="PS01302">
    <property type="entry name" value="UPF0758"/>
    <property type="match status" value="1"/>
</dbReference>
<accession>Q8Y6Y2</accession>
<proteinExistence type="inferred from homology"/>
<gene>
    <name type="ordered locus">lmo1549</name>
</gene>
<keyword id="KW-0378">Hydrolase</keyword>
<keyword id="KW-0479">Metal-binding</keyword>
<keyword id="KW-0482">Metalloprotease</keyword>
<keyword id="KW-0645">Protease</keyword>
<keyword id="KW-1185">Reference proteome</keyword>
<keyword id="KW-0862">Zinc</keyword>
<reference key="1">
    <citation type="journal article" date="2001" name="Science">
        <title>Comparative genomics of Listeria species.</title>
        <authorList>
            <person name="Glaser P."/>
            <person name="Frangeul L."/>
            <person name="Buchrieser C."/>
            <person name="Rusniok C."/>
            <person name="Amend A."/>
            <person name="Baquero F."/>
            <person name="Berche P."/>
            <person name="Bloecker H."/>
            <person name="Brandt P."/>
            <person name="Chakraborty T."/>
            <person name="Charbit A."/>
            <person name="Chetouani F."/>
            <person name="Couve E."/>
            <person name="de Daruvar A."/>
            <person name="Dehoux P."/>
            <person name="Domann E."/>
            <person name="Dominguez-Bernal G."/>
            <person name="Duchaud E."/>
            <person name="Durant L."/>
            <person name="Dussurget O."/>
            <person name="Entian K.-D."/>
            <person name="Fsihi H."/>
            <person name="Garcia-del Portillo F."/>
            <person name="Garrido P."/>
            <person name="Gautier L."/>
            <person name="Goebel W."/>
            <person name="Gomez-Lopez N."/>
            <person name="Hain T."/>
            <person name="Hauf J."/>
            <person name="Jackson D."/>
            <person name="Jones L.-M."/>
            <person name="Kaerst U."/>
            <person name="Kreft J."/>
            <person name="Kuhn M."/>
            <person name="Kunst F."/>
            <person name="Kurapkat G."/>
            <person name="Madueno E."/>
            <person name="Maitournam A."/>
            <person name="Mata Vicente J."/>
            <person name="Ng E."/>
            <person name="Nedjari H."/>
            <person name="Nordsiek G."/>
            <person name="Novella S."/>
            <person name="de Pablos B."/>
            <person name="Perez-Diaz J.-C."/>
            <person name="Purcell R."/>
            <person name="Remmel B."/>
            <person name="Rose M."/>
            <person name="Schlueter T."/>
            <person name="Simoes N."/>
            <person name="Tierrez A."/>
            <person name="Vazquez-Boland J.-A."/>
            <person name="Voss H."/>
            <person name="Wehland J."/>
            <person name="Cossart P."/>
        </authorList>
    </citation>
    <scope>NUCLEOTIDE SEQUENCE [LARGE SCALE GENOMIC DNA]</scope>
    <source>
        <strain>ATCC BAA-679 / EGD-e</strain>
    </source>
</reference>
<sequence length="224" mass="25081">MLTHEISENEKPREKLQNYGIEALSSSELVALIIETGTKNESVLTIANRIIMKFKNVGEMQYASIEEFQLVNGIGIAKASKIMAAIELGRRISIVTEQEEVVVRCPEDAVKLVMPELAFLFQEHFHCLFLNTKNQVIYRQTIFVGGLNASIVHPREVFRLALRKSAASIMCFHNHPSGDPTPSSEDLLVTKRLAEAGNIVGITLLDHIIIGKNKYISLKEKGYF</sequence>
<name>Y1549_LISMO</name>
<organism>
    <name type="scientific">Listeria monocytogenes serovar 1/2a (strain ATCC BAA-679 / EGD-e)</name>
    <dbReference type="NCBI Taxonomy" id="169963"/>
    <lineage>
        <taxon>Bacteria</taxon>
        <taxon>Bacillati</taxon>
        <taxon>Bacillota</taxon>
        <taxon>Bacilli</taxon>
        <taxon>Bacillales</taxon>
        <taxon>Listeriaceae</taxon>
        <taxon>Listeria</taxon>
    </lineage>
</organism>
<evidence type="ECO:0000255" key="1">
    <source>
        <dbReference type="PROSITE-ProRule" id="PRU01182"/>
    </source>
</evidence>
<evidence type="ECO:0000305" key="2"/>